<protein>
    <recommendedName>
        <fullName evidence="1">Argininosuccinate lyase</fullName>
        <shortName evidence="1">ASAL</shortName>
        <ecNumber evidence="1">4.3.2.1</ecNumber>
    </recommendedName>
    <alternativeName>
        <fullName evidence="1">Arginosuccinase</fullName>
    </alternativeName>
</protein>
<reference key="1">
    <citation type="journal article" date="2003" name="Genome Res.">
        <title>Comparative complete genome sequence analysis of the amino acid replacements responsible for the thermostability of Corynebacterium efficiens.</title>
        <authorList>
            <person name="Nishio Y."/>
            <person name="Nakamura Y."/>
            <person name="Kawarabayasi Y."/>
            <person name="Usuda Y."/>
            <person name="Kimura E."/>
            <person name="Sugimoto S."/>
            <person name="Matsui K."/>
            <person name="Yamagishi A."/>
            <person name="Kikuchi H."/>
            <person name="Ikeo K."/>
            <person name="Gojobori T."/>
        </authorList>
    </citation>
    <scope>NUCLEOTIDE SEQUENCE [LARGE SCALE GENOMIC DNA]</scope>
    <source>
        <strain>DSM 44549 / YS-314 / AJ 12310 / JCM 11189 / NBRC 100395</strain>
    </source>
</reference>
<gene>
    <name evidence="1" type="primary">argH</name>
    <name type="ordered locus">CE1533</name>
</gene>
<proteinExistence type="inferred from homology"/>
<accession>Q8FTM8</accession>
<name>ARLY_COREF</name>
<organism>
    <name type="scientific">Corynebacterium efficiens (strain DSM 44549 / YS-314 / AJ 12310 / JCM 11189 / NBRC 100395)</name>
    <dbReference type="NCBI Taxonomy" id="196164"/>
    <lineage>
        <taxon>Bacteria</taxon>
        <taxon>Bacillati</taxon>
        <taxon>Actinomycetota</taxon>
        <taxon>Actinomycetes</taxon>
        <taxon>Mycobacteriales</taxon>
        <taxon>Corynebacteriaceae</taxon>
        <taxon>Corynebacterium</taxon>
    </lineage>
</organism>
<feature type="chain" id="PRO_0000137763" description="Argininosuccinate lyase">
    <location>
        <begin position="1"/>
        <end position="477"/>
    </location>
</feature>
<dbReference type="EC" id="4.3.2.1" evidence="1"/>
<dbReference type="EMBL" id="BA000035">
    <property type="protein sequence ID" value="BAC18343.1"/>
    <property type="molecule type" value="Genomic_DNA"/>
</dbReference>
<dbReference type="RefSeq" id="WP_011075494.1">
    <property type="nucleotide sequence ID" value="NC_004369.1"/>
</dbReference>
<dbReference type="SMR" id="Q8FTM8"/>
<dbReference type="STRING" id="196164.gene:10741948"/>
<dbReference type="KEGG" id="cef:CE1533"/>
<dbReference type="eggNOG" id="COG0165">
    <property type="taxonomic scope" value="Bacteria"/>
</dbReference>
<dbReference type="HOGENOM" id="CLU_027272_2_2_11"/>
<dbReference type="OrthoDB" id="9769623at2"/>
<dbReference type="UniPathway" id="UPA00068">
    <property type="reaction ID" value="UER00114"/>
</dbReference>
<dbReference type="Proteomes" id="UP000001409">
    <property type="component" value="Chromosome"/>
</dbReference>
<dbReference type="GO" id="GO:0005829">
    <property type="term" value="C:cytosol"/>
    <property type="evidence" value="ECO:0007669"/>
    <property type="project" value="TreeGrafter"/>
</dbReference>
<dbReference type="GO" id="GO:0004056">
    <property type="term" value="F:argininosuccinate lyase activity"/>
    <property type="evidence" value="ECO:0007669"/>
    <property type="project" value="UniProtKB-UniRule"/>
</dbReference>
<dbReference type="GO" id="GO:0042450">
    <property type="term" value="P:arginine biosynthetic process via ornithine"/>
    <property type="evidence" value="ECO:0007669"/>
    <property type="project" value="InterPro"/>
</dbReference>
<dbReference type="GO" id="GO:0006526">
    <property type="term" value="P:L-arginine biosynthetic process"/>
    <property type="evidence" value="ECO:0007669"/>
    <property type="project" value="UniProtKB-UniRule"/>
</dbReference>
<dbReference type="CDD" id="cd01359">
    <property type="entry name" value="Argininosuccinate_lyase"/>
    <property type="match status" value="1"/>
</dbReference>
<dbReference type="FunFam" id="1.10.40.30:FF:000001">
    <property type="entry name" value="Argininosuccinate lyase"/>
    <property type="match status" value="1"/>
</dbReference>
<dbReference type="FunFam" id="1.20.200.10:FF:000015">
    <property type="entry name" value="argininosuccinate lyase isoform X2"/>
    <property type="match status" value="1"/>
</dbReference>
<dbReference type="Gene3D" id="1.10.40.30">
    <property type="entry name" value="Fumarase/aspartase (C-terminal domain)"/>
    <property type="match status" value="1"/>
</dbReference>
<dbReference type="Gene3D" id="1.20.200.10">
    <property type="entry name" value="Fumarase/aspartase (Central domain)"/>
    <property type="match status" value="1"/>
</dbReference>
<dbReference type="Gene3D" id="1.10.275.10">
    <property type="entry name" value="Fumarase/aspartase (N-terminal domain)"/>
    <property type="match status" value="1"/>
</dbReference>
<dbReference type="HAMAP" id="MF_00006">
    <property type="entry name" value="Arg_succ_lyase"/>
    <property type="match status" value="1"/>
</dbReference>
<dbReference type="InterPro" id="IPR029419">
    <property type="entry name" value="Arg_succ_lyase_C"/>
</dbReference>
<dbReference type="InterPro" id="IPR009049">
    <property type="entry name" value="Argininosuccinate_lyase"/>
</dbReference>
<dbReference type="InterPro" id="IPR024083">
    <property type="entry name" value="Fumarase/histidase_N"/>
</dbReference>
<dbReference type="InterPro" id="IPR020557">
    <property type="entry name" value="Fumarate_lyase_CS"/>
</dbReference>
<dbReference type="InterPro" id="IPR000362">
    <property type="entry name" value="Fumarate_lyase_fam"/>
</dbReference>
<dbReference type="InterPro" id="IPR022761">
    <property type="entry name" value="Fumarate_lyase_N"/>
</dbReference>
<dbReference type="InterPro" id="IPR008948">
    <property type="entry name" value="L-Aspartase-like"/>
</dbReference>
<dbReference type="NCBIfam" id="TIGR00838">
    <property type="entry name" value="argH"/>
    <property type="match status" value="1"/>
</dbReference>
<dbReference type="PANTHER" id="PTHR43814">
    <property type="entry name" value="ARGININOSUCCINATE LYASE"/>
    <property type="match status" value="1"/>
</dbReference>
<dbReference type="PANTHER" id="PTHR43814:SF1">
    <property type="entry name" value="ARGININOSUCCINATE LYASE"/>
    <property type="match status" value="1"/>
</dbReference>
<dbReference type="Pfam" id="PF14698">
    <property type="entry name" value="ASL_C2"/>
    <property type="match status" value="1"/>
</dbReference>
<dbReference type="Pfam" id="PF00206">
    <property type="entry name" value="Lyase_1"/>
    <property type="match status" value="1"/>
</dbReference>
<dbReference type="PRINTS" id="PR00145">
    <property type="entry name" value="ARGSUCLYASE"/>
</dbReference>
<dbReference type="PRINTS" id="PR00149">
    <property type="entry name" value="FUMRATELYASE"/>
</dbReference>
<dbReference type="SUPFAM" id="SSF48557">
    <property type="entry name" value="L-aspartase-like"/>
    <property type="match status" value="1"/>
</dbReference>
<dbReference type="PROSITE" id="PS00163">
    <property type="entry name" value="FUMARATE_LYASES"/>
    <property type="match status" value="1"/>
</dbReference>
<sequence>MEKHGTNEGALWGGRFSGGPSEAMFALSVSTHFDWVLAPYDVLASKAHAKVLHSAGLLSDADLDTMLEGLDQLGRDVADGSFGPLPSDEDVHGAMERGLIDRVGPEVGGRLRAGRSRNDQVATLFRMWVRDAIRGIAVGVTELIDALTTQAAAHPDAIMPGKTHFQAAQPVLLAHQLQAHAQPLLRDLERIRDLDKRLAVSPYGSGALAGSSLQLNPEAIAAELGFDSAADNSIDATSSRDFASEAAFVLAQIAVDMSRLAEEIIAWCTPEFGYIVLADAWSTGSSIMPQKKNPDVAELTRGKTGRLIGNLAGLLATLKAQPLAYNRDLQEDKEPIVDSVAQLNLLLPAMTGLVSTLTFNTDRMRELAPAGYTLATDLAEWMVREGVPFREAHEASGACVRIAEGRGVDLVDLTDEELAGVDPRLTPAVRDVLTIEGAVASRATRGGTAGDRVSEQRDRINQANADHLAWATTPVRS</sequence>
<keyword id="KW-0028">Amino-acid biosynthesis</keyword>
<keyword id="KW-0055">Arginine biosynthesis</keyword>
<keyword id="KW-0963">Cytoplasm</keyword>
<keyword id="KW-0456">Lyase</keyword>
<keyword id="KW-1185">Reference proteome</keyword>
<comment type="catalytic activity">
    <reaction evidence="1">
        <text>2-(N(omega)-L-arginino)succinate = fumarate + L-arginine</text>
        <dbReference type="Rhea" id="RHEA:24020"/>
        <dbReference type="ChEBI" id="CHEBI:29806"/>
        <dbReference type="ChEBI" id="CHEBI:32682"/>
        <dbReference type="ChEBI" id="CHEBI:57472"/>
        <dbReference type="EC" id="4.3.2.1"/>
    </reaction>
</comment>
<comment type="pathway">
    <text evidence="1">Amino-acid biosynthesis; L-arginine biosynthesis; L-arginine from L-ornithine and carbamoyl phosphate: step 3/3.</text>
</comment>
<comment type="subcellular location">
    <subcellularLocation>
        <location evidence="1">Cytoplasm</location>
    </subcellularLocation>
</comment>
<comment type="similarity">
    <text evidence="1">Belongs to the lyase 1 family. Argininosuccinate lyase subfamily.</text>
</comment>
<evidence type="ECO:0000255" key="1">
    <source>
        <dbReference type="HAMAP-Rule" id="MF_00006"/>
    </source>
</evidence>